<evidence type="ECO:0000250" key="1"/>
<evidence type="ECO:0000250" key="2">
    <source>
        <dbReference type="UniProtKB" id="O00555"/>
    </source>
</evidence>
<evidence type="ECO:0000250" key="3">
    <source>
        <dbReference type="UniProtKB" id="P91645"/>
    </source>
</evidence>
<evidence type="ECO:0000255" key="4"/>
<evidence type="ECO:0000255" key="5">
    <source>
        <dbReference type="PROSITE-ProRule" id="PRU00448"/>
    </source>
</evidence>
<evidence type="ECO:0000256" key="6">
    <source>
        <dbReference type="SAM" id="MobiDB-lite"/>
    </source>
</evidence>
<evidence type="ECO:0000305" key="7"/>
<feature type="chain" id="PRO_0000404525" description="Voltage-dependent calcium channel type A subunit alpha-1" evidence="1">
    <location>
        <begin position="1"/>
        <end position="1904"/>
    </location>
</feature>
<feature type="topological domain" description="Cytoplasmic" evidence="4">
    <location>
        <begin position="30"/>
        <end position="168"/>
    </location>
</feature>
<feature type="transmembrane region" description="Helical; Name=S1 of repeat I" evidence="4">
    <location>
        <begin position="169"/>
        <end position="187"/>
    </location>
</feature>
<feature type="topological domain" description="Extracellular" evidence="4">
    <location>
        <begin position="188"/>
        <end position="205"/>
    </location>
</feature>
<feature type="transmembrane region" description="Helical; Name=S2 of repeat I" evidence="4">
    <location>
        <begin position="206"/>
        <end position="225"/>
    </location>
</feature>
<feature type="topological domain" description="Cytoplasmic" evidence="4">
    <location>
        <begin position="226"/>
        <end position="237"/>
    </location>
</feature>
<feature type="transmembrane region" description="Helical; Name=S3 of repeat I" evidence="4">
    <location>
        <begin position="238"/>
        <end position="259"/>
    </location>
</feature>
<feature type="topological domain" description="Extracellular" evidence="4">
    <location>
        <begin position="260"/>
        <end position="264"/>
    </location>
</feature>
<feature type="transmembrane region" description="Helical; Name=S4 of repeat I" evidence="4">
    <location>
        <begin position="265"/>
        <end position="283"/>
    </location>
</feature>
<feature type="topological domain" description="Cytoplasmic" evidence="4">
    <location>
        <begin position="284"/>
        <end position="302"/>
    </location>
</feature>
<feature type="transmembrane region" description="Helical; Name=S5 of repeat I" evidence="4">
    <location>
        <begin position="303"/>
        <end position="322"/>
    </location>
</feature>
<feature type="topological domain" description="Extracellular" evidence="4">
    <location>
        <begin position="323"/>
        <end position="419"/>
    </location>
</feature>
<feature type="transmembrane region" description="Helical; Name=S6 of repeat I" evidence="4">
    <location>
        <begin position="420"/>
        <end position="444"/>
    </location>
</feature>
<feature type="topological domain" description="Cytoplasmic" evidence="4">
    <location>
        <begin position="445"/>
        <end position="568"/>
    </location>
</feature>
<feature type="transmembrane region" description="Helical; Name=S1 of repeat II" evidence="4">
    <location>
        <begin position="569"/>
        <end position="587"/>
    </location>
</feature>
<feature type="topological domain" description="Extracellular" evidence="4">
    <location>
        <begin position="588"/>
        <end position="602"/>
    </location>
</feature>
<feature type="transmembrane region" description="Helical; Name=S2 of repeat II" evidence="4">
    <location>
        <begin position="603"/>
        <end position="622"/>
    </location>
</feature>
<feature type="topological domain" description="Cytoplasmic" evidence="4">
    <location>
        <begin position="623"/>
        <end position="630"/>
    </location>
</feature>
<feature type="transmembrane region" description="Helical; Name=S3 of repeat II" evidence="4">
    <location>
        <begin position="631"/>
        <end position="649"/>
    </location>
</feature>
<feature type="topological domain" description="Extracellular" evidence="4">
    <location>
        <begin position="650"/>
        <end position="658"/>
    </location>
</feature>
<feature type="transmembrane region" description="Helical; Name=S4 of repeat II" evidence="4">
    <location>
        <begin position="659"/>
        <end position="677"/>
    </location>
</feature>
<feature type="topological domain" description="Cytoplasmic" evidence="4">
    <location>
        <begin position="678"/>
        <end position="696"/>
    </location>
</feature>
<feature type="transmembrane region" description="Helical; Name=S5 of repeat II" evidence="4">
    <location>
        <begin position="697"/>
        <end position="716"/>
    </location>
</feature>
<feature type="topological domain" description="Extracellular" evidence="4">
    <location>
        <begin position="717"/>
        <end position="769"/>
    </location>
</feature>
<feature type="transmembrane region" description="Helical; Name=S6 of repeat II" evidence="4">
    <location>
        <begin position="770"/>
        <end position="794"/>
    </location>
</feature>
<feature type="topological domain" description="Cytoplasmic" evidence="4">
    <location>
        <begin position="795"/>
        <end position="895"/>
    </location>
</feature>
<feature type="transmembrane region" description="Helical; Name=S1 of repeat III" evidence="4">
    <location>
        <begin position="896"/>
        <end position="914"/>
    </location>
</feature>
<feature type="topological domain" description="Extracellular" evidence="4">
    <location>
        <begin position="915"/>
        <end position="930"/>
    </location>
</feature>
<feature type="transmembrane region" description="Helical; Name=S2 of repeat III" evidence="4">
    <location>
        <begin position="931"/>
        <end position="950"/>
    </location>
</feature>
<feature type="topological domain" description="Cytoplasmic" evidence="4">
    <location>
        <begin position="951"/>
        <end position="962"/>
    </location>
</feature>
<feature type="transmembrane region" description="Helical; Name=S3 of repeat III" evidence="4">
    <location>
        <begin position="963"/>
        <end position="981"/>
    </location>
</feature>
<feature type="topological domain" description="Extracellular" evidence="4">
    <location>
        <begin position="982"/>
        <end position="994"/>
    </location>
</feature>
<feature type="transmembrane region" description="Helical; Name=S4 of repeat III" evidence="4">
    <location>
        <begin position="995"/>
        <end position="1013"/>
    </location>
</feature>
<feature type="topological domain" description="Cytoplasmic" evidence="4">
    <location>
        <begin position="1014"/>
        <end position="1032"/>
    </location>
</feature>
<feature type="transmembrane region" description="Helical; Name=S5 of repeat III" evidence="4">
    <location>
        <begin position="1033"/>
        <end position="1052"/>
    </location>
</feature>
<feature type="topological domain" description="Extracellular" evidence="4">
    <location>
        <begin position="1053"/>
        <end position="1141"/>
    </location>
</feature>
<feature type="transmembrane region" description="Helical; Name=S6 of repeat III" evidence="4">
    <location>
        <begin position="1142"/>
        <end position="1166"/>
    </location>
</feature>
<feature type="topological domain" description="Cytoplasmic" evidence="4">
    <location>
        <begin position="1167"/>
        <end position="1221"/>
    </location>
</feature>
<feature type="transmembrane region" description="Helical; Name=S1 of repeat IV" evidence="4">
    <location>
        <begin position="1222"/>
        <end position="1250"/>
    </location>
</feature>
<feature type="topological domain" description="Extracellular" evidence="4">
    <location>
        <begin position="1251"/>
        <end position="1255"/>
    </location>
</feature>
<feature type="transmembrane region" description="Helical; Name=S2 of repeat IV" evidence="4">
    <location>
        <begin position="1256"/>
        <end position="1275"/>
    </location>
</feature>
<feature type="topological domain" description="Cytoplasmic" evidence="4">
    <location>
        <begin position="1276"/>
        <end position="1283"/>
    </location>
</feature>
<feature type="transmembrane region" description="Helical; Name=S3 of repeat IV" evidence="4">
    <location>
        <begin position="1284"/>
        <end position="1302"/>
    </location>
</feature>
<feature type="topological domain" description="Extracellular" evidence="4">
    <location>
        <begin position="1303"/>
        <end position="1309"/>
    </location>
</feature>
<feature type="transmembrane region" description="Helical; Name=S4 of repeat IV" evidence="4">
    <location>
        <begin position="1310"/>
        <end position="1328"/>
    </location>
</feature>
<feature type="topological domain" description="Cytoplasmic" evidence="4">
    <location>
        <begin position="1329"/>
        <end position="1347"/>
    </location>
</feature>
<feature type="transmembrane region" description="Helical; Name=S5 of repeat IV" evidence="4">
    <location>
        <begin position="1348"/>
        <end position="1367"/>
    </location>
</feature>
<feature type="topological domain" description="Extracellular" evidence="4">
    <location>
        <begin position="1368"/>
        <end position="1431"/>
    </location>
</feature>
<feature type="transmembrane region" description="Helical; Name=S6 of repeat IV" evidence="4">
    <location>
        <begin position="1432"/>
        <end position="1456"/>
    </location>
</feature>
<feature type="topological domain" description="Cytoplasmic" evidence="4">
    <location>
        <begin position="1457"/>
        <end position="1904"/>
    </location>
</feature>
<feature type="repeat" description="I">
    <location>
        <begin position="155"/>
        <end position="447"/>
    </location>
</feature>
<feature type="repeat" description="II">
    <location>
        <begin position="554"/>
        <end position="797"/>
    </location>
</feature>
<feature type="repeat" description="III">
    <location>
        <begin position="890"/>
        <end position="1177"/>
    </location>
</feature>
<feature type="repeat" description="IV">
    <location>
        <begin position="1214"/>
        <end position="1470"/>
    </location>
</feature>
<feature type="domain" description="EF-hand" evidence="5">
    <location>
        <begin position="1476"/>
        <end position="1511"/>
    </location>
</feature>
<feature type="region of interest" description="Disordered" evidence="6">
    <location>
        <begin position="1"/>
        <end position="45"/>
    </location>
</feature>
<feature type="region of interest" description="Disordered" evidence="6">
    <location>
        <begin position="513"/>
        <end position="543"/>
    </location>
</feature>
<feature type="region of interest" description="Disordered" evidence="6">
    <location>
        <begin position="827"/>
        <end position="869"/>
    </location>
</feature>
<feature type="region of interest" description="Phenylalkylamine binding" evidence="1">
    <location>
        <begin position="1430"/>
        <end position="1471"/>
    </location>
</feature>
<feature type="region of interest" description="Disordered" evidence="6">
    <location>
        <begin position="1652"/>
        <end position="1694"/>
    </location>
</feature>
<feature type="region of interest" description="Disordered" evidence="6">
    <location>
        <begin position="1710"/>
        <end position="1788"/>
    </location>
</feature>
<feature type="region of interest" description="Disordered" evidence="6">
    <location>
        <begin position="1870"/>
        <end position="1904"/>
    </location>
</feature>
<feature type="compositionally biased region" description="Gly residues" evidence="6">
    <location>
        <begin position="23"/>
        <end position="35"/>
    </location>
</feature>
<feature type="compositionally biased region" description="Acidic residues" evidence="6">
    <location>
        <begin position="523"/>
        <end position="536"/>
    </location>
</feature>
<feature type="compositionally biased region" description="Low complexity" evidence="6">
    <location>
        <begin position="1670"/>
        <end position="1681"/>
    </location>
</feature>
<feature type="compositionally biased region" description="Basic and acidic residues" evidence="6">
    <location>
        <begin position="1682"/>
        <end position="1691"/>
    </location>
</feature>
<feature type="compositionally biased region" description="Basic residues" evidence="6">
    <location>
        <begin position="1710"/>
        <end position="1725"/>
    </location>
</feature>
<feature type="compositionally biased region" description="Low complexity" evidence="6">
    <location>
        <begin position="1727"/>
        <end position="1740"/>
    </location>
</feature>
<feature type="compositionally biased region" description="Polar residues" evidence="6">
    <location>
        <begin position="1751"/>
        <end position="1762"/>
    </location>
</feature>
<feature type="compositionally biased region" description="Basic residues" evidence="6">
    <location>
        <begin position="1771"/>
        <end position="1784"/>
    </location>
</feature>
<feature type="binding site" evidence="7">
    <location>
        <position position="1489"/>
    </location>
    <ligand>
        <name>Ca(2+)</name>
        <dbReference type="ChEBI" id="CHEBI:29108"/>
    </ligand>
</feature>
<feature type="binding site" evidence="7">
    <location>
        <position position="1491"/>
    </location>
    <ligand>
        <name>Ca(2+)</name>
        <dbReference type="ChEBI" id="CHEBI:29108"/>
    </ligand>
</feature>
<feature type="binding site" evidence="7">
    <location>
        <position position="1493"/>
    </location>
    <ligand>
        <name>Ca(2+)</name>
        <dbReference type="ChEBI" id="CHEBI:29108"/>
    </ligand>
</feature>
<feature type="binding site" evidence="7">
    <location>
        <position position="1495"/>
    </location>
    <ligand>
        <name>Ca(2+)</name>
        <dbReference type="ChEBI" id="CHEBI:29108"/>
    </ligand>
</feature>
<feature type="binding site" evidence="7">
    <location>
        <position position="1500"/>
    </location>
    <ligand>
        <name>Ca(2+)</name>
        <dbReference type="ChEBI" id="CHEBI:29108"/>
    </ligand>
</feature>
<feature type="site" description="Calcium ion selectivity and permeability" evidence="1">
    <location>
        <position position="402"/>
    </location>
</feature>
<feature type="site" description="Calcium ion selectivity and permeability" evidence="1">
    <location>
        <position position="748"/>
    </location>
</feature>
<feature type="site" description="Calcium ion selectivity and permeability" evidence="1">
    <location>
        <position position="1117"/>
    </location>
</feature>
<feature type="site" description="Calcium ion selectivity and permeability" evidence="1">
    <location>
        <position position="1405"/>
    </location>
</feature>
<feature type="glycosylation site" description="N-linked (GlcNAc...) asparagine" evidence="4">
    <location>
        <position position="353"/>
    </location>
</feature>
<feature type="glycosylation site" description="N-linked (GlcNAc...) asparagine" evidence="4">
    <location>
        <position position="367"/>
    </location>
</feature>
<feature type="glycosylation site" description="N-linked (GlcNAc...) asparagine" evidence="4">
    <location>
        <position position="993"/>
    </location>
</feature>
<protein>
    <recommendedName>
        <fullName>Voltage-dependent calcium channel type A subunit alpha-1</fullName>
    </recommendedName>
    <alternativeName>
        <fullName>Cacophony protein</fullName>
    </alternativeName>
</protein>
<reference key="1">
    <citation type="submission" date="2009-05" db="EMBL/GenBank/DDBJ databases">
        <title>Coding region for CAC.</title>
        <authorList>
            <person name="Yang Z."/>
            <person name="Qiao M."/>
            <person name="Jin Y."/>
        </authorList>
    </citation>
    <scope>NUCLEOTIDE SEQUENCE [MRNA]</scope>
</reference>
<sequence length="1904" mass="215891">MLGGVGGRHMSTRRRGSSPLVRGGAGLTGYAGPGASGNSNDVAAIPPDMQRYAGRRRRAVTTSDHKSCALVQTRIKLGDIMLAAQEAAQRDPGYASQYRRRPRLAGLSFGDWTSFGGEVPGLVDMAPGRDQGGGAGGGGGGGKGTTSLFILSEDNCIRKHTRFIIEWPPFEYAVLLTIIANCVVLALEEHLPKQDKTILAQKLEATEIYFLGIFCVEASLKILALGFVLHRGSYLRNIWNIMDFFVVVTGFITAFSQGIELDMDLRTLRAIRVLRPLKLVSGIPSLQVVLKSIIKAMAPLLQIGLLVLFAIVIFAIIGLEFYSGTLHKTCYSIRDINVIVKEGEQASPCNTDNKSEAPFGAHVCDANISTCMDHWEGPNFGITSFDNIGFAMLTVFQCITMEGWTAILYWTNDALGSTYNWIYFIPLIVLGSFFMLNLVLGVLSGEFAKEREKVENRQSFLKLRRQQQLEHELYCYLNWICKAEEVILAEERTTEEEKKHILEGRKRAEAKKKKLGKSKSTDTEEEEGDDDQDDGELSSSTKEKGPCKQFWLAEKRFRYWIRKSVKSQKFYWFVIVLVFFNTVCVAVEHYGQPQWLTDFLYFAEFVFLALFMLEMFIKVYALGPRTYFDSSFNRFDCVVISGSIFEVIWSEVKSGSFGLSVLRALRLLRIFKVTKYWKSLRNLVISLLSSMRSIISLLFLLFLFILIFALLGMQLFGGQFNFDSGTPPTNFNTFPIALLTVFQILTGEDWNEVMYQGIESQGGHKKGMIYSLYFIVLVLFGNYTLLNVFLAIAVDNLANAQELSAAENEEEEEDKQKQAQEIEKEIQSLQNPKDGGAPKVEICPPNGKGGKQSSEEEKKQDEDDDTGPKPMLPYSSMFILSPTNPVRRAAHWVVNLRYFDFFIMVVISLSSIALAAEDPVWEDSPRNEVLNYFDYAFTGVFTVEMILKIIDLGIILHPGSYLREFWNIMDAVVVICAAVSFAFDMTGSSAGQNLSTIKSLRVLRVLRPLKTIKRVPKLKAVFDCVVNSLKNVINILIVYILFQFIFAVIAVQLFNGKFFYCSDESKYTQQDCQGQYFVFEDGALLPEPKKREWQSQFFHYDNVMAAMLTLFAVQTGEGWPQILQNSMAATYEDKGPIQNFRIEMSIFYIVYFIVFPFFFVNIFVALIIITFQEQGEAELQDGEIDKNQKSCIDFTIQARPLERYMPKERNSVKYKIWRIVVSTPFEYFIMGLIVLNTVLLMMKFHRQSDAYKNTLKYMNMCFTGMFTVECILKIAAFGVRNFFKDAWNTFDFITVIGSIVDALVIEFGENFINVGFLRLFRAARLIKLLRQGYTIRILLWTFVQSFKALPYVCLLIAMLFFIYAIIGMQVFGNIALDADTSITKHNNFQSFIQGLMLLFRCATGEAWPNIMLSCVKGRPCDAKAGKQEGGCGSNIAYAYFVSFIFFCSFLMLNLFVAVIMDNFDYLTRDSSILGAHHLDEFVRIWAEYDPNATGKIHYTEMYDMLKNMDPPLGFGNKCPNRLAYKKLIRMNMPVDVDLKVNFTTTLFALIRENLNIKVRRASERNQANEELRDTIRSIWPLQAKKMLDLLIPRNEEIGRGKMTVGKIYVCLLILESWRTTRFGQIESAGQPIMELQDVVVSDSRAGSLESLTHTGKRLHPPVQPVRHPSRSPSLRHSPGRPGYDHHGHYYHEGPGFSDTVSNVVEIQRHTHHPHPSQYNHRHRMRGPWSASTSPARTPSPIHHIDRGRHYGTTSLEQRSRSPSPIGGRQPPHTHQHYHRHHPHQHSYPVLVTRRGRGRRLPPTPNKPSTLQLKPANINFPKLNASPTHGSHIHVPIPAGMQHPPPGQHLPPMQPSHCPLSFEQAVAMGRGGRLLPSPVPNGYKPQPQAKQRTPRHSDSDEDDWC</sequence>
<dbReference type="EMBL" id="GQ202019">
    <property type="protein sequence ID" value="ACV86997.1"/>
    <property type="molecule type" value="mRNA"/>
</dbReference>
<dbReference type="RefSeq" id="NP_001159376.1">
    <property type="nucleotide sequence ID" value="NM_001165904.1"/>
</dbReference>
<dbReference type="SMR" id="C9D7C2"/>
<dbReference type="FunCoup" id="C9D7C2">
    <property type="interactions" value="151"/>
</dbReference>
<dbReference type="STRING" id="7460.C9D7C2"/>
<dbReference type="GlyCosmos" id="C9D7C2">
    <property type="glycosylation" value="3 sites, No reported glycans"/>
</dbReference>
<dbReference type="PaxDb" id="7460-GB51897-PA"/>
<dbReference type="EnsemblMetazoa" id="NM_001165904">
    <property type="protein sequence ID" value="NP_001159376"/>
    <property type="gene ID" value="GeneID_408764"/>
</dbReference>
<dbReference type="GeneID" id="408764"/>
<dbReference type="KEGG" id="ame:408764"/>
<dbReference type="CTD" id="12285"/>
<dbReference type="eggNOG" id="KOG2301">
    <property type="taxonomic scope" value="Eukaryota"/>
</dbReference>
<dbReference type="InParanoid" id="C9D7C2"/>
<dbReference type="OrthoDB" id="431720at2759"/>
<dbReference type="PhylomeDB" id="C9D7C2"/>
<dbReference type="Proteomes" id="UP000005203">
    <property type="component" value="Linkage group LG3"/>
</dbReference>
<dbReference type="GO" id="GO:0045202">
    <property type="term" value="C:synapse"/>
    <property type="evidence" value="ECO:0007669"/>
    <property type="project" value="GOC"/>
</dbReference>
<dbReference type="GO" id="GO:0005891">
    <property type="term" value="C:voltage-gated calcium channel complex"/>
    <property type="evidence" value="ECO:0007669"/>
    <property type="project" value="InterPro"/>
</dbReference>
<dbReference type="GO" id="GO:0005509">
    <property type="term" value="F:calcium ion binding"/>
    <property type="evidence" value="ECO:0007669"/>
    <property type="project" value="InterPro"/>
</dbReference>
<dbReference type="GO" id="GO:0008331">
    <property type="term" value="F:high voltage-gated calcium channel activity"/>
    <property type="evidence" value="ECO:0007669"/>
    <property type="project" value="TreeGrafter"/>
</dbReference>
<dbReference type="GO" id="GO:0098703">
    <property type="term" value="P:calcium ion import across plasma membrane"/>
    <property type="evidence" value="ECO:0007669"/>
    <property type="project" value="TreeGrafter"/>
</dbReference>
<dbReference type="GO" id="GO:0007268">
    <property type="term" value="P:chemical synaptic transmission"/>
    <property type="evidence" value="ECO:0007669"/>
    <property type="project" value="TreeGrafter"/>
</dbReference>
<dbReference type="FunFam" id="1.10.287.70:FF:000007">
    <property type="entry name" value="Voltage-dependent L-type calcium channel subunit alpha"/>
    <property type="match status" value="1"/>
</dbReference>
<dbReference type="FunFam" id="1.20.120.350:FF:000001">
    <property type="entry name" value="Voltage-dependent L-type calcium channel subunit alpha"/>
    <property type="match status" value="1"/>
</dbReference>
<dbReference type="FunFam" id="1.20.120.350:FF:000043">
    <property type="entry name" value="Voltage-dependent L-type calcium channel subunit alpha"/>
    <property type="match status" value="1"/>
</dbReference>
<dbReference type="FunFam" id="1.10.238.10:FF:000063">
    <property type="entry name" value="Voltage-dependent N-type calcium channel subunit alpha"/>
    <property type="match status" value="1"/>
</dbReference>
<dbReference type="FunFam" id="1.10.287.70:FF:000059">
    <property type="entry name" value="Voltage-dependent N-type calcium channel subunit alpha"/>
    <property type="match status" value="1"/>
</dbReference>
<dbReference type="FunFam" id="1.20.120.350:FF:000011">
    <property type="entry name" value="Voltage-dependent N-type calcium channel subunit alpha"/>
    <property type="match status" value="1"/>
</dbReference>
<dbReference type="FunFam" id="1.20.120.350:FF:000013">
    <property type="entry name" value="Voltage-dependent N-type calcium channel subunit alpha"/>
    <property type="match status" value="1"/>
</dbReference>
<dbReference type="FunFam" id="1.10.287.70:FF:000023">
    <property type="entry name" value="Voltage-dependent R-type calcium channel subunit alpha"/>
    <property type="match status" value="1"/>
</dbReference>
<dbReference type="Gene3D" id="1.10.287.70">
    <property type="match status" value="4"/>
</dbReference>
<dbReference type="Gene3D" id="6.10.250.2500">
    <property type="match status" value="1"/>
</dbReference>
<dbReference type="Gene3D" id="1.10.238.10">
    <property type="entry name" value="EF-hand"/>
    <property type="match status" value="1"/>
</dbReference>
<dbReference type="Gene3D" id="1.20.120.350">
    <property type="entry name" value="Voltage-gated potassium channels. Chain C"/>
    <property type="match status" value="4"/>
</dbReference>
<dbReference type="InterPro" id="IPR002048">
    <property type="entry name" value="EF_hand_dom"/>
</dbReference>
<dbReference type="InterPro" id="IPR031649">
    <property type="entry name" value="GPHH_dom"/>
</dbReference>
<dbReference type="InterPro" id="IPR005821">
    <property type="entry name" value="Ion_trans_dom"/>
</dbReference>
<dbReference type="InterPro" id="IPR014873">
    <property type="entry name" value="VDCC_a1su_IQ"/>
</dbReference>
<dbReference type="InterPro" id="IPR050599">
    <property type="entry name" value="VDCC_alpha-1_subunit"/>
</dbReference>
<dbReference type="InterPro" id="IPR002077">
    <property type="entry name" value="VDCCAlpha1"/>
</dbReference>
<dbReference type="InterPro" id="IPR027359">
    <property type="entry name" value="Volt_channel_dom_sf"/>
</dbReference>
<dbReference type="PANTHER" id="PTHR45628">
    <property type="entry name" value="VOLTAGE-DEPENDENT CALCIUM CHANNEL TYPE A SUBUNIT ALPHA-1"/>
    <property type="match status" value="1"/>
</dbReference>
<dbReference type="PANTHER" id="PTHR45628:SF7">
    <property type="entry name" value="VOLTAGE-DEPENDENT CALCIUM CHANNEL TYPE A SUBUNIT ALPHA-1"/>
    <property type="match status" value="1"/>
</dbReference>
<dbReference type="Pfam" id="PF08763">
    <property type="entry name" value="Ca_chan_IQ"/>
    <property type="match status" value="1"/>
</dbReference>
<dbReference type="Pfam" id="PF16905">
    <property type="entry name" value="GPHH"/>
    <property type="match status" value="1"/>
</dbReference>
<dbReference type="Pfam" id="PF00520">
    <property type="entry name" value="Ion_trans"/>
    <property type="match status" value="4"/>
</dbReference>
<dbReference type="PRINTS" id="PR00167">
    <property type="entry name" value="CACHANNEL"/>
</dbReference>
<dbReference type="SMART" id="SM01062">
    <property type="entry name" value="Ca_chan_IQ"/>
    <property type="match status" value="1"/>
</dbReference>
<dbReference type="SUPFAM" id="SSF81324">
    <property type="entry name" value="Voltage-gated potassium channels"/>
    <property type="match status" value="4"/>
</dbReference>
<dbReference type="PROSITE" id="PS50222">
    <property type="entry name" value="EF_HAND_2"/>
    <property type="match status" value="1"/>
</dbReference>
<accession>C9D7C2</accession>
<gene>
    <name type="primary">CAC</name>
</gene>
<name>CAC1A_APIME</name>
<comment type="function">
    <text evidence="2 3">Voltage-sensitive calcium channels (VSCC) mediate the entry of calcium ions into excitable cells and are also involved in a variety of calcium-dependent processes, including muscle contraction, neurotransmitter release, gene expression, cell motility, cell division and cell death.</text>
</comment>
<comment type="subunit">
    <text evidence="1">Interacts with CATSPER1 and CATSPER2, leading to suppress T-type calcium channel activity.</text>
</comment>
<comment type="subcellular location">
    <subcellularLocation>
        <location evidence="2">Membrane</location>
        <topology evidence="2">Multi-pass membrane protein</topology>
    </subcellularLocation>
</comment>
<comment type="domain">
    <text>Each of the four internal repeats contains five hydrophobic transmembrane segments (S1, S2, S3, S5, S6) and one positively charged transmembrane segment (S4). S4 segments probably represent the voltage-sensor and are characterized by a series of positively charged amino acids at every third position.</text>
</comment>
<comment type="similarity">
    <text evidence="7">Belongs to the calcium channel alpha-1 subunit (TC 1.A.1.11) family. CACNA1I subfamily.</text>
</comment>
<keyword id="KW-0106">Calcium</keyword>
<keyword id="KW-0107">Calcium channel</keyword>
<keyword id="KW-0109">Calcium transport</keyword>
<keyword id="KW-0325">Glycoprotein</keyword>
<keyword id="KW-0407">Ion channel</keyword>
<keyword id="KW-0406">Ion transport</keyword>
<keyword id="KW-0472">Membrane</keyword>
<keyword id="KW-0479">Metal-binding</keyword>
<keyword id="KW-0597">Phosphoprotein</keyword>
<keyword id="KW-1185">Reference proteome</keyword>
<keyword id="KW-0677">Repeat</keyword>
<keyword id="KW-0812">Transmembrane</keyword>
<keyword id="KW-1133">Transmembrane helix</keyword>
<keyword id="KW-0813">Transport</keyword>
<keyword id="KW-0851">Voltage-gated channel</keyword>
<proteinExistence type="evidence at transcript level"/>
<organism>
    <name type="scientific">Apis mellifera</name>
    <name type="common">Honeybee</name>
    <dbReference type="NCBI Taxonomy" id="7460"/>
    <lineage>
        <taxon>Eukaryota</taxon>
        <taxon>Metazoa</taxon>
        <taxon>Ecdysozoa</taxon>
        <taxon>Arthropoda</taxon>
        <taxon>Hexapoda</taxon>
        <taxon>Insecta</taxon>
        <taxon>Pterygota</taxon>
        <taxon>Neoptera</taxon>
        <taxon>Endopterygota</taxon>
        <taxon>Hymenoptera</taxon>
        <taxon>Apocrita</taxon>
        <taxon>Aculeata</taxon>
        <taxon>Apoidea</taxon>
        <taxon>Anthophila</taxon>
        <taxon>Apidae</taxon>
        <taxon>Apis</taxon>
    </lineage>
</organism>